<evidence type="ECO:0000255" key="1">
    <source>
        <dbReference type="HAMAP-Rule" id="MF_01382"/>
    </source>
</evidence>
<evidence type="ECO:0000256" key="2">
    <source>
        <dbReference type="SAM" id="MobiDB-lite"/>
    </source>
</evidence>
<protein>
    <recommendedName>
        <fullName evidence="1">Protein translocase subunit SecA</fullName>
        <ecNumber evidence="1">7.4.2.8</ecNumber>
    </recommendedName>
</protein>
<dbReference type="EC" id="7.4.2.8" evidence="1"/>
<dbReference type="EMBL" id="AE017223">
    <property type="protein sequence ID" value="AAX75230.1"/>
    <property type="molecule type" value="Genomic_DNA"/>
</dbReference>
<dbReference type="RefSeq" id="WP_002965012.1">
    <property type="nucleotide sequence ID" value="NC_006932.1"/>
</dbReference>
<dbReference type="SMR" id="Q57AV4"/>
<dbReference type="EnsemblBacteria" id="AAX75230">
    <property type="protein sequence ID" value="AAX75230"/>
    <property type="gene ID" value="BruAb1_1921"/>
</dbReference>
<dbReference type="GeneID" id="93017729"/>
<dbReference type="KEGG" id="bmb:BruAb1_1921"/>
<dbReference type="HOGENOM" id="CLU_005314_3_0_5"/>
<dbReference type="Proteomes" id="UP000000540">
    <property type="component" value="Chromosome I"/>
</dbReference>
<dbReference type="GO" id="GO:0031522">
    <property type="term" value="C:cell envelope Sec protein transport complex"/>
    <property type="evidence" value="ECO:0007669"/>
    <property type="project" value="TreeGrafter"/>
</dbReference>
<dbReference type="GO" id="GO:0005829">
    <property type="term" value="C:cytosol"/>
    <property type="evidence" value="ECO:0007669"/>
    <property type="project" value="TreeGrafter"/>
</dbReference>
<dbReference type="GO" id="GO:0005886">
    <property type="term" value="C:plasma membrane"/>
    <property type="evidence" value="ECO:0007669"/>
    <property type="project" value="UniProtKB-SubCell"/>
</dbReference>
<dbReference type="GO" id="GO:0005524">
    <property type="term" value="F:ATP binding"/>
    <property type="evidence" value="ECO:0007669"/>
    <property type="project" value="UniProtKB-UniRule"/>
</dbReference>
<dbReference type="GO" id="GO:0046872">
    <property type="term" value="F:metal ion binding"/>
    <property type="evidence" value="ECO:0007669"/>
    <property type="project" value="UniProtKB-KW"/>
</dbReference>
<dbReference type="GO" id="GO:0008564">
    <property type="term" value="F:protein-exporting ATPase activity"/>
    <property type="evidence" value="ECO:0007669"/>
    <property type="project" value="UniProtKB-EC"/>
</dbReference>
<dbReference type="GO" id="GO:0065002">
    <property type="term" value="P:intracellular protein transmembrane transport"/>
    <property type="evidence" value="ECO:0007669"/>
    <property type="project" value="UniProtKB-UniRule"/>
</dbReference>
<dbReference type="GO" id="GO:0017038">
    <property type="term" value="P:protein import"/>
    <property type="evidence" value="ECO:0007669"/>
    <property type="project" value="InterPro"/>
</dbReference>
<dbReference type="GO" id="GO:0006605">
    <property type="term" value="P:protein targeting"/>
    <property type="evidence" value="ECO:0007669"/>
    <property type="project" value="UniProtKB-UniRule"/>
</dbReference>
<dbReference type="GO" id="GO:0043952">
    <property type="term" value="P:protein transport by the Sec complex"/>
    <property type="evidence" value="ECO:0007669"/>
    <property type="project" value="TreeGrafter"/>
</dbReference>
<dbReference type="CDD" id="cd17928">
    <property type="entry name" value="DEXDc_SecA"/>
    <property type="match status" value="1"/>
</dbReference>
<dbReference type="CDD" id="cd18803">
    <property type="entry name" value="SF2_C_secA"/>
    <property type="match status" value="1"/>
</dbReference>
<dbReference type="FunFam" id="3.90.1440.10:FF:000001">
    <property type="entry name" value="Preprotein translocase subunit SecA"/>
    <property type="match status" value="1"/>
</dbReference>
<dbReference type="FunFam" id="1.10.3060.10:FF:000003">
    <property type="entry name" value="Protein translocase subunit SecA"/>
    <property type="match status" value="1"/>
</dbReference>
<dbReference type="FunFam" id="3.40.50.300:FF:000334">
    <property type="entry name" value="Protein translocase subunit SecA"/>
    <property type="match status" value="1"/>
</dbReference>
<dbReference type="FunFam" id="3.40.50.300:FF:001790">
    <property type="entry name" value="Protein translocase subunit SecA"/>
    <property type="match status" value="1"/>
</dbReference>
<dbReference type="Gene3D" id="3.10.450.50">
    <property type="match status" value="1"/>
</dbReference>
<dbReference type="Gene3D" id="1.10.3060.10">
    <property type="entry name" value="Helical scaffold and wing domains of SecA"/>
    <property type="match status" value="1"/>
</dbReference>
<dbReference type="Gene3D" id="3.40.50.300">
    <property type="entry name" value="P-loop containing nucleotide triphosphate hydrolases"/>
    <property type="match status" value="2"/>
</dbReference>
<dbReference type="Gene3D" id="3.90.1440.10">
    <property type="entry name" value="SecA, preprotein cross-linking domain"/>
    <property type="match status" value="1"/>
</dbReference>
<dbReference type="HAMAP" id="MF_01382">
    <property type="entry name" value="SecA"/>
    <property type="match status" value="1"/>
</dbReference>
<dbReference type="InterPro" id="IPR014001">
    <property type="entry name" value="Helicase_ATP-bd"/>
</dbReference>
<dbReference type="InterPro" id="IPR001650">
    <property type="entry name" value="Helicase_C-like"/>
</dbReference>
<dbReference type="InterPro" id="IPR027417">
    <property type="entry name" value="P-loop_NTPase"/>
</dbReference>
<dbReference type="InterPro" id="IPR004027">
    <property type="entry name" value="SEC_C_motif"/>
</dbReference>
<dbReference type="InterPro" id="IPR000185">
    <property type="entry name" value="SecA"/>
</dbReference>
<dbReference type="InterPro" id="IPR020937">
    <property type="entry name" value="SecA_CS"/>
</dbReference>
<dbReference type="InterPro" id="IPR011115">
    <property type="entry name" value="SecA_DEAD"/>
</dbReference>
<dbReference type="InterPro" id="IPR014018">
    <property type="entry name" value="SecA_motor_DEAD"/>
</dbReference>
<dbReference type="InterPro" id="IPR011130">
    <property type="entry name" value="SecA_preprotein_X-link_dom"/>
</dbReference>
<dbReference type="InterPro" id="IPR044722">
    <property type="entry name" value="SecA_SF2_C"/>
</dbReference>
<dbReference type="InterPro" id="IPR011116">
    <property type="entry name" value="SecA_Wing/Scaffold"/>
</dbReference>
<dbReference type="InterPro" id="IPR036266">
    <property type="entry name" value="SecA_Wing/Scaffold_sf"/>
</dbReference>
<dbReference type="InterPro" id="IPR036670">
    <property type="entry name" value="SecA_X-link_sf"/>
</dbReference>
<dbReference type="NCBIfam" id="NF009538">
    <property type="entry name" value="PRK12904.1"/>
    <property type="match status" value="1"/>
</dbReference>
<dbReference type="NCBIfam" id="TIGR00963">
    <property type="entry name" value="secA"/>
    <property type="match status" value="1"/>
</dbReference>
<dbReference type="PANTHER" id="PTHR30612:SF0">
    <property type="entry name" value="CHLOROPLAST PROTEIN-TRANSPORTING ATPASE"/>
    <property type="match status" value="1"/>
</dbReference>
<dbReference type="PANTHER" id="PTHR30612">
    <property type="entry name" value="SECA INNER MEMBRANE COMPONENT OF SEC PROTEIN SECRETION SYSTEM"/>
    <property type="match status" value="1"/>
</dbReference>
<dbReference type="Pfam" id="PF21090">
    <property type="entry name" value="P-loop_SecA"/>
    <property type="match status" value="1"/>
</dbReference>
<dbReference type="Pfam" id="PF02810">
    <property type="entry name" value="SEC-C"/>
    <property type="match status" value="1"/>
</dbReference>
<dbReference type="Pfam" id="PF07517">
    <property type="entry name" value="SecA_DEAD"/>
    <property type="match status" value="1"/>
</dbReference>
<dbReference type="Pfam" id="PF01043">
    <property type="entry name" value="SecA_PP_bind"/>
    <property type="match status" value="1"/>
</dbReference>
<dbReference type="Pfam" id="PF07516">
    <property type="entry name" value="SecA_SW"/>
    <property type="match status" value="1"/>
</dbReference>
<dbReference type="PRINTS" id="PR00906">
    <property type="entry name" value="SECA"/>
</dbReference>
<dbReference type="SMART" id="SM00957">
    <property type="entry name" value="SecA_DEAD"/>
    <property type="match status" value="1"/>
</dbReference>
<dbReference type="SMART" id="SM00958">
    <property type="entry name" value="SecA_PP_bind"/>
    <property type="match status" value="1"/>
</dbReference>
<dbReference type="SUPFAM" id="SSF81886">
    <property type="entry name" value="Helical scaffold and wing domains of SecA"/>
    <property type="match status" value="1"/>
</dbReference>
<dbReference type="SUPFAM" id="SSF52540">
    <property type="entry name" value="P-loop containing nucleoside triphosphate hydrolases"/>
    <property type="match status" value="2"/>
</dbReference>
<dbReference type="SUPFAM" id="SSF81767">
    <property type="entry name" value="Pre-protein crosslinking domain of SecA"/>
    <property type="match status" value="1"/>
</dbReference>
<dbReference type="PROSITE" id="PS01312">
    <property type="entry name" value="SECA"/>
    <property type="match status" value="1"/>
</dbReference>
<dbReference type="PROSITE" id="PS51196">
    <property type="entry name" value="SECA_MOTOR_DEAD"/>
    <property type="match status" value="1"/>
</dbReference>
<feature type="chain" id="PRO_1000073464" description="Protein translocase subunit SecA">
    <location>
        <begin position="1"/>
        <end position="906"/>
    </location>
</feature>
<feature type="region of interest" description="Disordered" evidence="2">
    <location>
        <begin position="868"/>
        <end position="887"/>
    </location>
</feature>
<feature type="binding site" evidence="1">
    <location>
        <position position="89"/>
    </location>
    <ligand>
        <name>ATP</name>
        <dbReference type="ChEBI" id="CHEBI:30616"/>
    </ligand>
</feature>
<feature type="binding site" evidence="1">
    <location>
        <begin position="107"/>
        <end position="111"/>
    </location>
    <ligand>
        <name>ATP</name>
        <dbReference type="ChEBI" id="CHEBI:30616"/>
    </ligand>
</feature>
<feature type="binding site" evidence="1">
    <location>
        <position position="502"/>
    </location>
    <ligand>
        <name>ATP</name>
        <dbReference type="ChEBI" id="CHEBI:30616"/>
    </ligand>
</feature>
<feature type="binding site" evidence="1">
    <location>
        <position position="890"/>
    </location>
    <ligand>
        <name>Zn(2+)</name>
        <dbReference type="ChEBI" id="CHEBI:29105"/>
    </ligand>
</feature>
<feature type="binding site" evidence="1">
    <location>
        <position position="892"/>
    </location>
    <ligand>
        <name>Zn(2+)</name>
        <dbReference type="ChEBI" id="CHEBI:29105"/>
    </ligand>
</feature>
<feature type="binding site" evidence="1">
    <location>
        <position position="901"/>
    </location>
    <ligand>
        <name>Zn(2+)</name>
        <dbReference type="ChEBI" id="CHEBI:29105"/>
    </ligand>
</feature>
<feature type="binding site" evidence="1">
    <location>
        <position position="902"/>
    </location>
    <ligand>
        <name>Zn(2+)</name>
        <dbReference type="ChEBI" id="CHEBI:29105"/>
    </ligand>
</feature>
<gene>
    <name evidence="1" type="primary">secA</name>
    <name type="ordered locus">BruAb1_1921</name>
</gene>
<organism>
    <name type="scientific">Brucella abortus biovar 1 (strain 9-941)</name>
    <dbReference type="NCBI Taxonomy" id="262698"/>
    <lineage>
        <taxon>Bacteria</taxon>
        <taxon>Pseudomonadati</taxon>
        <taxon>Pseudomonadota</taxon>
        <taxon>Alphaproteobacteria</taxon>
        <taxon>Hyphomicrobiales</taxon>
        <taxon>Brucellaceae</taxon>
        <taxon>Brucella/Ochrobactrum group</taxon>
        <taxon>Brucella</taxon>
    </lineage>
</organism>
<keyword id="KW-0067">ATP-binding</keyword>
<keyword id="KW-0997">Cell inner membrane</keyword>
<keyword id="KW-1003">Cell membrane</keyword>
<keyword id="KW-0963">Cytoplasm</keyword>
<keyword id="KW-0472">Membrane</keyword>
<keyword id="KW-0479">Metal-binding</keyword>
<keyword id="KW-0547">Nucleotide-binding</keyword>
<keyword id="KW-0653">Protein transport</keyword>
<keyword id="KW-1278">Translocase</keyword>
<keyword id="KW-0811">Translocation</keyword>
<keyword id="KW-0813">Transport</keyword>
<keyword id="KW-0862">Zinc</keyword>
<comment type="function">
    <text evidence="1">Part of the Sec protein translocase complex. Interacts with the SecYEG preprotein conducting channel. Has a central role in coupling the hydrolysis of ATP to the transfer of proteins into and across the cell membrane, serving both as a receptor for the preprotein-SecB complex and as an ATP-driven molecular motor driving the stepwise translocation of polypeptide chains across the membrane.</text>
</comment>
<comment type="catalytic activity">
    <reaction evidence="1">
        <text>ATP + H2O + cellular proteinSide 1 = ADP + phosphate + cellular proteinSide 2.</text>
        <dbReference type="EC" id="7.4.2.8"/>
    </reaction>
</comment>
<comment type="cofactor">
    <cofactor evidence="1">
        <name>Zn(2+)</name>
        <dbReference type="ChEBI" id="CHEBI:29105"/>
    </cofactor>
    <text evidence="1">May bind 1 zinc ion per subunit.</text>
</comment>
<comment type="subunit">
    <text evidence="1">Monomer and homodimer. Part of the essential Sec protein translocation apparatus which comprises SecA, SecYEG and auxiliary proteins SecDF-YajC and YidC.</text>
</comment>
<comment type="subcellular location">
    <subcellularLocation>
        <location evidence="1">Cell inner membrane</location>
        <topology evidence="1">Peripheral membrane protein</topology>
        <orientation evidence="1">Cytoplasmic side</orientation>
    </subcellularLocation>
    <subcellularLocation>
        <location evidence="1">Cytoplasm</location>
    </subcellularLocation>
    <text evidence="1">Distribution is 50-50.</text>
</comment>
<comment type="similarity">
    <text evidence="1">Belongs to the SecA family.</text>
</comment>
<sequence length="906" mass="102871">MVSFGGLARKIFGSSNDRRVKTLRQRAEQITALEKNYENLTDEQLQAKTAEFRAALAEGKSLDSLLPDAFATAREAAKRVLGMRPFDVQLIGGMVLHERGIAEMRTGEGKTLMATLPVYLNALEGKGVHVVTVNDYLATRDAETMGRLYNFLGLTVGVIKHGLDDDERRAAYACDITYGTNNELGFDYLRDNMKYERAQMVQRPHNYAIVDEVDSILIDEARTPLIISGPLEDRSDFYNLIDTFIPPLAEEDYEVDEKQKTAIFTEVGTEKVEKLLEAAGHLKGESLYDIENVAVVHHLNNALRAHKLFQRDKDYIVRNDEIVIIDEFTGRMMPGRRYSEGLHQALEAKEHVTIQPENQTLASITFQNYFRMYNKLSGMTGTAATEAEEFGNIYGLEVLEIPTNLPVQRIDEDDEVYRTVEEKYRAIVRDIRASHEKGQPILVGTTSIEKSEQLAERLRREGIKGFQVLNARYHEQEAYIIAQAGVPGAVTIATNMAGRGTDIQLGGNLEMRVRQELSDVPEGPEREEKIAAIKADIAQLKEKALAAGGLYVLATERHESRRIDNQLRGRSGRQGDPGRSKFFLSLQDDLMRIFGSDRMDGMLQKLGLKEDEAIVHPWINKALEKAQKKVEARNFEIRKNLLKYDDVMNDQRKVIFEQRLEMMDEEDLTETVAEMRHEVIEDMVILRIPKDAYAEKWDIAGLKQDIASKLNLDLPVEEWAKEEGIAEEEFENRIKEAADKAAAEKAERFGPQIMTYVEKSVIMQSLDNLWREHLVNLDHLRSVVGFRGYAQRDPLNEYKTEAFELFQTMLANLREVVISQLMRVEIVREAPPEPQLPPMAGLHIDGTTGENDFDEAIWAEHQHDDRIVPPAQRDPADPRTWGKVSRNEPCPCGSGKKYKHCHGAFE</sequence>
<name>SECA_BRUAB</name>
<accession>Q57AV4</accession>
<reference key="1">
    <citation type="journal article" date="2005" name="J. Bacteriol.">
        <title>Completion of the genome sequence of Brucella abortus and comparison to the highly similar genomes of Brucella melitensis and Brucella suis.</title>
        <authorList>
            <person name="Halling S.M."/>
            <person name="Peterson-Burch B.D."/>
            <person name="Bricker B.J."/>
            <person name="Zuerner R.L."/>
            <person name="Qing Z."/>
            <person name="Li L.-L."/>
            <person name="Kapur V."/>
            <person name="Alt D.P."/>
            <person name="Olsen S.C."/>
        </authorList>
    </citation>
    <scope>NUCLEOTIDE SEQUENCE [LARGE SCALE GENOMIC DNA]</scope>
    <source>
        <strain>9-941</strain>
    </source>
</reference>
<proteinExistence type="inferred from homology"/>